<reference key="1">
    <citation type="submission" date="2002-03" db="EMBL/GenBank/DDBJ databases">
        <title>The Thermotoga neapolitana adenylate kinase contains zinc, as do the adenylate kinases from Gram+ bacteria.</title>
        <authorList>
            <person name="Vieille C."/>
            <person name="Hyun H.-H."/>
            <person name="Krishnamurthy H."/>
            <person name="Savchenko A."/>
            <person name="Yan H."/>
            <person name="Zeikus G."/>
        </authorList>
    </citation>
    <scope>NUCLEOTIDE SEQUENCE [GENOMIC DNA]</scope>
    <source>
        <strain>DSM 5068 / LA4</strain>
    </source>
</reference>
<protein>
    <recommendedName>
        <fullName evidence="1">Adenylate kinase</fullName>
        <shortName evidence="1">AK</shortName>
        <ecNumber evidence="1">2.7.4.3</ecNumber>
    </recommendedName>
    <alternativeName>
        <fullName evidence="1">ATP-AMP transphosphorylase</fullName>
    </alternativeName>
    <alternativeName>
        <fullName evidence="1">ATP:AMP phosphotransferase</fullName>
    </alternativeName>
    <alternativeName>
        <fullName evidence="1">Adenylate monophosphate kinase</fullName>
    </alternativeName>
</protein>
<dbReference type="EC" id="2.7.4.3" evidence="1"/>
<dbReference type="EMBL" id="AF494055">
    <property type="protein sequence ID" value="AAN86272.1"/>
    <property type="molecule type" value="Genomic_DNA"/>
</dbReference>
<dbReference type="SMR" id="Q8GGL2"/>
<dbReference type="OMA" id="VYHEQTA"/>
<dbReference type="BRENDA" id="2.7.4.3">
    <property type="organism ID" value="6332"/>
</dbReference>
<dbReference type="UniPathway" id="UPA00588">
    <property type="reaction ID" value="UER00649"/>
</dbReference>
<dbReference type="GO" id="GO:0005737">
    <property type="term" value="C:cytoplasm"/>
    <property type="evidence" value="ECO:0007669"/>
    <property type="project" value="UniProtKB-SubCell"/>
</dbReference>
<dbReference type="GO" id="GO:0004017">
    <property type="term" value="F:adenylate kinase activity"/>
    <property type="evidence" value="ECO:0007669"/>
    <property type="project" value="UniProtKB-UniRule"/>
</dbReference>
<dbReference type="GO" id="GO:0005524">
    <property type="term" value="F:ATP binding"/>
    <property type="evidence" value="ECO:0007669"/>
    <property type="project" value="UniProtKB-UniRule"/>
</dbReference>
<dbReference type="GO" id="GO:0008270">
    <property type="term" value="F:zinc ion binding"/>
    <property type="evidence" value="ECO:0007669"/>
    <property type="project" value="UniProtKB-UniRule"/>
</dbReference>
<dbReference type="GO" id="GO:0044209">
    <property type="term" value="P:AMP salvage"/>
    <property type="evidence" value="ECO:0007669"/>
    <property type="project" value="UniProtKB-UniRule"/>
</dbReference>
<dbReference type="CDD" id="cd01428">
    <property type="entry name" value="ADK"/>
    <property type="match status" value="1"/>
</dbReference>
<dbReference type="FunFam" id="3.40.50.300:FF:000106">
    <property type="entry name" value="Adenylate kinase mitochondrial"/>
    <property type="match status" value="1"/>
</dbReference>
<dbReference type="Gene3D" id="3.40.50.300">
    <property type="entry name" value="P-loop containing nucleotide triphosphate hydrolases"/>
    <property type="match status" value="1"/>
</dbReference>
<dbReference type="HAMAP" id="MF_00235">
    <property type="entry name" value="Adenylate_kinase_Adk"/>
    <property type="match status" value="1"/>
</dbReference>
<dbReference type="InterPro" id="IPR006259">
    <property type="entry name" value="Adenyl_kin_sub"/>
</dbReference>
<dbReference type="InterPro" id="IPR000850">
    <property type="entry name" value="Adenylat/UMP-CMP_kin"/>
</dbReference>
<dbReference type="InterPro" id="IPR033690">
    <property type="entry name" value="Adenylat_kinase_CS"/>
</dbReference>
<dbReference type="InterPro" id="IPR007862">
    <property type="entry name" value="Adenylate_kinase_lid-dom"/>
</dbReference>
<dbReference type="InterPro" id="IPR027417">
    <property type="entry name" value="P-loop_NTPase"/>
</dbReference>
<dbReference type="NCBIfam" id="TIGR01351">
    <property type="entry name" value="adk"/>
    <property type="match status" value="1"/>
</dbReference>
<dbReference type="NCBIfam" id="NF001380">
    <property type="entry name" value="PRK00279.1-2"/>
    <property type="match status" value="1"/>
</dbReference>
<dbReference type="NCBIfam" id="NF001381">
    <property type="entry name" value="PRK00279.1-3"/>
    <property type="match status" value="1"/>
</dbReference>
<dbReference type="NCBIfam" id="NF001386">
    <property type="entry name" value="PRK00279.2-4"/>
    <property type="match status" value="1"/>
</dbReference>
<dbReference type="NCBIfam" id="NF011100">
    <property type="entry name" value="PRK14527.1"/>
    <property type="match status" value="1"/>
</dbReference>
<dbReference type="PANTHER" id="PTHR23359">
    <property type="entry name" value="NUCLEOTIDE KINASE"/>
    <property type="match status" value="1"/>
</dbReference>
<dbReference type="Pfam" id="PF00406">
    <property type="entry name" value="ADK"/>
    <property type="match status" value="1"/>
</dbReference>
<dbReference type="Pfam" id="PF05191">
    <property type="entry name" value="ADK_lid"/>
    <property type="match status" value="1"/>
</dbReference>
<dbReference type="PRINTS" id="PR00094">
    <property type="entry name" value="ADENYLTKNASE"/>
</dbReference>
<dbReference type="SUPFAM" id="SSF52540">
    <property type="entry name" value="P-loop containing nucleoside triphosphate hydrolases"/>
    <property type="match status" value="1"/>
</dbReference>
<dbReference type="PROSITE" id="PS00113">
    <property type="entry name" value="ADENYLATE_KINASE"/>
    <property type="match status" value="1"/>
</dbReference>
<sequence length="220" mass="25064">MMAYLVFLGPPGAGKGTYAKRIQEKTGIPHISTGDIFRDIVKKENDELGKKIKEIMEKGELVPDELVNEVVKRRLSEKDCEKGFILDGYPRTVAQAEFLDSFLESQNKQLTAAVLFDVPEDVVVQRLTSRRICPKCGRIYNMISLPPKEDELCDDCKVKLVQRDDDKEETVRHRYKVYLEKTQPVIDYYGKKGILKRVDGTIGIDNVVAEVLKIIGWSDK</sequence>
<keyword id="KW-0067">ATP-binding</keyword>
<keyword id="KW-0963">Cytoplasm</keyword>
<keyword id="KW-0418">Kinase</keyword>
<keyword id="KW-0479">Metal-binding</keyword>
<keyword id="KW-0545">Nucleotide biosynthesis</keyword>
<keyword id="KW-0547">Nucleotide-binding</keyword>
<keyword id="KW-0808">Transferase</keyword>
<keyword id="KW-0862">Zinc</keyword>
<comment type="function">
    <text evidence="1">Catalyzes the reversible transfer of the terminal phosphate group between ATP and AMP. Plays an important role in cellular energy homeostasis and in adenine nucleotide metabolism.</text>
</comment>
<comment type="catalytic activity">
    <reaction evidence="1">
        <text>AMP + ATP = 2 ADP</text>
        <dbReference type="Rhea" id="RHEA:12973"/>
        <dbReference type="ChEBI" id="CHEBI:30616"/>
        <dbReference type="ChEBI" id="CHEBI:456215"/>
        <dbReference type="ChEBI" id="CHEBI:456216"/>
        <dbReference type="EC" id="2.7.4.3"/>
    </reaction>
</comment>
<comment type="pathway">
    <text evidence="1">Purine metabolism; AMP biosynthesis via salvage pathway; AMP from ADP: step 1/1.</text>
</comment>
<comment type="subunit">
    <text evidence="1">Monomer.</text>
</comment>
<comment type="subcellular location">
    <subcellularLocation>
        <location evidence="1">Cytoplasm</location>
    </subcellularLocation>
</comment>
<comment type="domain">
    <text evidence="1">Consists of three domains, a large central CORE domain and two small peripheral domains, NMPbind and LID, which undergo movements during catalysis. The LID domain closes over the site of phosphoryl transfer upon ATP binding. Assembling and dissambling the active center during each catalytic cycle provides an effective means to prevent ATP hydrolysis. Some bacteria have evolved a zinc-coordinating structure that stabilizes the LID domain.</text>
</comment>
<comment type="similarity">
    <text evidence="1">Belongs to the adenylate kinase family.</text>
</comment>
<accession>Q8GGL2</accession>
<gene>
    <name evidence="1" type="primary">adk</name>
</gene>
<evidence type="ECO:0000255" key="1">
    <source>
        <dbReference type="HAMAP-Rule" id="MF_00235"/>
    </source>
</evidence>
<name>KAD_THENE</name>
<organism>
    <name type="scientific">Thermotoga neapolitana</name>
    <dbReference type="NCBI Taxonomy" id="2337"/>
    <lineage>
        <taxon>Bacteria</taxon>
        <taxon>Thermotogati</taxon>
        <taxon>Thermotogota</taxon>
        <taxon>Thermotogae</taxon>
        <taxon>Thermotogales</taxon>
        <taxon>Thermotogaceae</taxon>
        <taxon>Thermotoga</taxon>
    </lineage>
</organism>
<feature type="chain" id="PRO_0000158874" description="Adenylate kinase">
    <location>
        <begin position="1"/>
        <end position="220"/>
    </location>
</feature>
<feature type="region of interest" description="NMP" evidence="1">
    <location>
        <begin position="32"/>
        <end position="62"/>
    </location>
</feature>
<feature type="region of interest" description="LID" evidence="1">
    <location>
        <begin position="129"/>
        <end position="166"/>
    </location>
</feature>
<feature type="binding site" evidence="1">
    <location>
        <begin position="12"/>
        <end position="17"/>
    </location>
    <ligand>
        <name>ATP</name>
        <dbReference type="ChEBI" id="CHEBI:30616"/>
    </ligand>
</feature>
<feature type="binding site" evidence="1">
    <location>
        <position position="33"/>
    </location>
    <ligand>
        <name>AMP</name>
        <dbReference type="ChEBI" id="CHEBI:456215"/>
    </ligand>
</feature>
<feature type="binding site" evidence="1">
    <location>
        <position position="38"/>
    </location>
    <ligand>
        <name>AMP</name>
        <dbReference type="ChEBI" id="CHEBI:456215"/>
    </ligand>
</feature>
<feature type="binding site" evidence="1">
    <location>
        <begin position="60"/>
        <end position="62"/>
    </location>
    <ligand>
        <name>AMP</name>
        <dbReference type="ChEBI" id="CHEBI:456215"/>
    </ligand>
</feature>
<feature type="binding site" evidence="1">
    <location>
        <begin position="88"/>
        <end position="91"/>
    </location>
    <ligand>
        <name>AMP</name>
        <dbReference type="ChEBI" id="CHEBI:456215"/>
    </ligand>
</feature>
<feature type="binding site" evidence="1">
    <location>
        <position position="95"/>
    </location>
    <ligand>
        <name>AMP</name>
        <dbReference type="ChEBI" id="CHEBI:456215"/>
    </ligand>
</feature>
<feature type="binding site" evidence="1">
    <location>
        <position position="130"/>
    </location>
    <ligand>
        <name>ATP</name>
        <dbReference type="ChEBI" id="CHEBI:30616"/>
    </ligand>
</feature>
<feature type="binding site" evidence="1">
    <location>
        <position position="133"/>
    </location>
    <ligand>
        <name>Zn(2+)</name>
        <dbReference type="ChEBI" id="CHEBI:29105"/>
        <note>structural</note>
    </ligand>
</feature>
<feature type="binding site" evidence="1">
    <location>
        <position position="136"/>
    </location>
    <ligand>
        <name>Zn(2+)</name>
        <dbReference type="ChEBI" id="CHEBI:29105"/>
        <note>structural</note>
    </ligand>
</feature>
<feature type="binding site" evidence="1">
    <location>
        <begin position="139"/>
        <end position="140"/>
    </location>
    <ligand>
        <name>ATP</name>
        <dbReference type="ChEBI" id="CHEBI:30616"/>
    </ligand>
</feature>
<feature type="binding site" evidence="1">
    <location>
        <position position="153"/>
    </location>
    <ligand>
        <name>Zn(2+)</name>
        <dbReference type="ChEBI" id="CHEBI:29105"/>
        <note>structural</note>
    </ligand>
</feature>
<feature type="binding site" evidence="1">
    <location>
        <position position="156"/>
    </location>
    <ligand>
        <name>Zn(2+)</name>
        <dbReference type="ChEBI" id="CHEBI:29105"/>
        <note>structural</note>
    </ligand>
</feature>
<feature type="binding site" evidence="1">
    <location>
        <position position="163"/>
    </location>
    <ligand>
        <name>AMP</name>
        <dbReference type="ChEBI" id="CHEBI:456215"/>
    </ligand>
</feature>
<feature type="binding site" evidence="1">
    <location>
        <position position="174"/>
    </location>
    <ligand>
        <name>AMP</name>
        <dbReference type="ChEBI" id="CHEBI:456215"/>
    </ligand>
</feature>
<feature type="binding site" evidence="1">
    <location>
        <position position="202"/>
    </location>
    <ligand>
        <name>ATP</name>
        <dbReference type="ChEBI" id="CHEBI:30616"/>
    </ligand>
</feature>
<proteinExistence type="inferred from homology"/>